<name>YR080_MIMIV</name>
<keyword id="KW-0175">Coiled coil</keyword>
<keyword id="KW-0229">DNA integration</keyword>
<keyword id="KW-0233">DNA recombination</keyword>
<keyword id="KW-0238">DNA-binding</keyword>
<keyword id="KW-1185">Reference proteome</keyword>
<organism>
    <name type="scientific">Acanthamoeba polyphaga mimivirus</name>
    <name type="common">APMV</name>
    <dbReference type="NCBI Taxonomy" id="212035"/>
    <lineage>
        <taxon>Viruses</taxon>
        <taxon>Varidnaviria</taxon>
        <taxon>Bamfordvirae</taxon>
        <taxon>Nucleocytoviricota</taxon>
        <taxon>Megaviricetes</taxon>
        <taxon>Imitervirales</taxon>
        <taxon>Mimiviridae</taxon>
        <taxon>Megamimivirinae</taxon>
        <taxon>Mimivirus</taxon>
        <taxon>Mimivirus bradfordmassiliense</taxon>
    </lineage>
</organism>
<proteinExistence type="inferred from homology"/>
<organismHost>
    <name type="scientific">Acanthamoeba polyphaga</name>
    <name type="common">Amoeba</name>
    <dbReference type="NCBI Taxonomy" id="5757"/>
</organismHost>
<dbReference type="EMBL" id="AY653733">
    <property type="protein sequence ID" value="AAV50355.1"/>
    <property type="molecule type" value="Genomic_DNA"/>
</dbReference>
<dbReference type="SMR" id="Q5UPF4"/>
<dbReference type="KEGG" id="vg:9924677"/>
<dbReference type="OrthoDB" id="26022at10239"/>
<dbReference type="Proteomes" id="UP000001134">
    <property type="component" value="Genome"/>
</dbReference>
<dbReference type="GO" id="GO:0003677">
    <property type="term" value="F:DNA binding"/>
    <property type="evidence" value="ECO:0007669"/>
    <property type="project" value="UniProtKB-KW"/>
</dbReference>
<dbReference type="GO" id="GO:0000150">
    <property type="term" value="F:DNA strand exchange activity"/>
    <property type="evidence" value="ECO:0007669"/>
    <property type="project" value="InterPro"/>
</dbReference>
<dbReference type="GO" id="GO:0015074">
    <property type="term" value="P:DNA integration"/>
    <property type="evidence" value="ECO:0007669"/>
    <property type="project" value="UniProtKB-KW"/>
</dbReference>
<dbReference type="GO" id="GO:0006355">
    <property type="term" value="P:regulation of DNA-templated transcription"/>
    <property type="evidence" value="ECO:0007669"/>
    <property type="project" value="InterPro"/>
</dbReference>
<dbReference type="Gene3D" id="1.10.1660.10">
    <property type="match status" value="1"/>
</dbReference>
<dbReference type="Gene3D" id="1.10.287.2170">
    <property type="match status" value="1"/>
</dbReference>
<dbReference type="Gene3D" id="3.40.50.1390">
    <property type="entry name" value="Resolvase, N-terminal catalytic domain"/>
    <property type="match status" value="1"/>
</dbReference>
<dbReference type="InterPro" id="IPR009061">
    <property type="entry name" value="DNA-bd_dom_put_sf"/>
</dbReference>
<dbReference type="InterPro" id="IPR000551">
    <property type="entry name" value="MerR-type_HTH_dom"/>
</dbReference>
<dbReference type="InterPro" id="IPR051491">
    <property type="entry name" value="Recombinase/Transposase-rel"/>
</dbReference>
<dbReference type="InterPro" id="IPR006118">
    <property type="entry name" value="Recombinase_CS"/>
</dbReference>
<dbReference type="InterPro" id="IPR006119">
    <property type="entry name" value="Resolv_N"/>
</dbReference>
<dbReference type="InterPro" id="IPR036162">
    <property type="entry name" value="Resolvase-like_N_sf"/>
</dbReference>
<dbReference type="InterPro" id="IPR048046">
    <property type="entry name" value="Transpos_IS607"/>
</dbReference>
<dbReference type="NCBIfam" id="NF033518">
    <property type="entry name" value="transpos_IS607"/>
    <property type="match status" value="1"/>
</dbReference>
<dbReference type="PANTHER" id="PTHR36172">
    <property type="match status" value="1"/>
</dbReference>
<dbReference type="PANTHER" id="PTHR36172:SF1">
    <property type="entry name" value="RESOLVASE-RELATED"/>
    <property type="match status" value="1"/>
</dbReference>
<dbReference type="Pfam" id="PF00376">
    <property type="entry name" value="MerR"/>
    <property type="match status" value="1"/>
</dbReference>
<dbReference type="Pfam" id="PF00239">
    <property type="entry name" value="Resolvase"/>
    <property type="match status" value="1"/>
</dbReference>
<dbReference type="SMART" id="SM00857">
    <property type="entry name" value="Resolvase"/>
    <property type="match status" value="1"/>
</dbReference>
<dbReference type="SUPFAM" id="SSF46955">
    <property type="entry name" value="Putative DNA-binding domain"/>
    <property type="match status" value="1"/>
</dbReference>
<dbReference type="SUPFAM" id="SSF53041">
    <property type="entry name" value="Resolvase-like"/>
    <property type="match status" value="1"/>
</dbReference>
<dbReference type="PROSITE" id="PS00397">
    <property type="entry name" value="RECOMBINASES_1"/>
    <property type="match status" value="1"/>
</dbReference>
<dbReference type="PROSITE" id="PS51736">
    <property type="entry name" value="RECOMBINASES_3"/>
    <property type="match status" value="1"/>
</dbReference>
<protein>
    <recommendedName>
        <fullName>Putative resolvase R80</fullName>
    </recommendedName>
</protein>
<evidence type="ECO:0000250" key="1"/>
<evidence type="ECO:0000255" key="2"/>
<evidence type="ECO:0000255" key="3">
    <source>
        <dbReference type="PROSITE-ProRule" id="PRU01072"/>
    </source>
</evidence>
<evidence type="ECO:0000305" key="4"/>
<reference key="1">
    <citation type="journal article" date="2004" name="Science">
        <title>The 1.2-megabase genome sequence of Mimivirus.</title>
        <authorList>
            <person name="Raoult D."/>
            <person name="Audic S."/>
            <person name="Robert C."/>
            <person name="Abergel C."/>
            <person name="Renesto P."/>
            <person name="Ogata H."/>
            <person name="La Scola B."/>
            <person name="Susan M."/>
            <person name="Claverie J.-M."/>
        </authorList>
    </citation>
    <scope>NUCLEOTIDE SEQUENCE [LARGE SCALE GENOMIC DNA]</scope>
    <source>
        <strain>Rowbotham-Bradford</strain>
    </source>
</reference>
<gene>
    <name type="ordered locus">MIMI_R80</name>
</gene>
<comment type="function">
    <text evidence="1">Resolvase catalyzes the resolution (a site-specific recombination) of the cointegrated replicon to yield the final transposition products.</text>
</comment>
<comment type="similarity">
    <text evidence="4">Belongs to the site-specific recombinase resolvase family.</text>
</comment>
<feature type="chain" id="PRO_0000247400" description="Putative resolvase R80">
    <location>
        <begin position="1"/>
        <end position="190"/>
    </location>
</feature>
<feature type="domain" description="Resolvase/invertase-type recombinase catalytic" evidence="3">
    <location>
        <begin position="61"/>
        <end position="190"/>
    </location>
</feature>
<feature type="DNA-binding region" description="H-T-H motif" evidence="2">
    <location>
        <begin position="11"/>
        <end position="30"/>
    </location>
</feature>
<feature type="coiled-coil region" evidence="2">
    <location>
        <begin position="67"/>
        <end position="92"/>
    </location>
</feature>
<feature type="active site" description="O-(5'-phospho-DNA)-serine intermediate" evidence="3">
    <location>
        <position position="69"/>
    </location>
</feature>
<accession>Q5UPF4</accession>
<sequence>MSKYMGGKEASSVLGVHQRTLYQWDKKGWIKTIRTKGGKRLYDVGSYLADKDEESKEDHKLSICYVRVSSNSQKDDLERQIKFMKKKYPNHTIIKDISSGINMNRKGLNKIIDLAIEGRIKEVVVAYKDRLAIFGFSLIERLIETYSDGKIVVVRKKENQEPQEELIEDMMDVMNVFTARRNGSRKYSNK</sequence>